<reference key="1">
    <citation type="journal article" date="2010" name="Genome Biol.">
        <title>Structure and dynamics of the pan-genome of Streptococcus pneumoniae and closely related species.</title>
        <authorList>
            <person name="Donati C."/>
            <person name="Hiller N.L."/>
            <person name="Tettelin H."/>
            <person name="Muzzi A."/>
            <person name="Croucher N.J."/>
            <person name="Angiuoli S.V."/>
            <person name="Oggioni M."/>
            <person name="Dunning Hotopp J.C."/>
            <person name="Hu F.Z."/>
            <person name="Riley D.R."/>
            <person name="Covacci A."/>
            <person name="Mitchell T.J."/>
            <person name="Bentley S.D."/>
            <person name="Kilian M."/>
            <person name="Ehrlich G.D."/>
            <person name="Rappuoli R."/>
            <person name="Moxon E.R."/>
            <person name="Masignani V."/>
        </authorList>
    </citation>
    <scope>NUCLEOTIDE SEQUENCE [LARGE SCALE GENOMIC DNA]</scope>
    <source>
        <strain>70585</strain>
    </source>
</reference>
<protein>
    <recommendedName>
        <fullName evidence="1">Tyrosine--tRNA ligase</fullName>
        <ecNumber evidence="1">6.1.1.1</ecNumber>
    </recommendedName>
    <alternativeName>
        <fullName evidence="1">Tyrosyl-tRNA synthetase</fullName>
        <shortName evidence="1">TyrRS</shortName>
    </alternativeName>
</protein>
<gene>
    <name evidence="1" type="primary">tyrS</name>
    <name type="ordered locus">SP70585_2206</name>
</gene>
<name>SYY_STRP7</name>
<feature type="chain" id="PRO_1000189336" description="Tyrosine--tRNA ligase">
    <location>
        <begin position="1"/>
        <end position="418"/>
    </location>
</feature>
<feature type="domain" description="S4 RNA-binding" evidence="1">
    <location>
        <begin position="352"/>
        <end position="418"/>
    </location>
</feature>
<feature type="short sequence motif" description="'HIGH' region">
    <location>
        <begin position="39"/>
        <end position="48"/>
    </location>
</feature>
<feature type="short sequence motif" description="'KMSKS' region">
    <location>
        <begin position="229"/>
        <end position="233"/>
    </location>
</feature>
<feature type="binding site" evidence="1">
    <location>
        <position position="34"/>
    </location>
    <ligand>
        <name>L-tyrosine</name>
        <dbReference type="ChEBI" id="CHEBI:58315"/>
    </ligand>
</feature>
<feature type="binding site" evidence="1">
    <location>
        <position position="169"/>
    </location>
    <ligand>
        <name>L-tyrosine</name>
        <dbReference type="ChEBI" id="CHEBI:58315"/>
    </ligand>
</feature>
<feature type="binding site" evidence="1">
    <location>
        <position position="173"/>
    </location>
    <ligand>
        <name>L-tyrosine</name>
        <dbReference type="ChEBI" id="CHEBI:58315"/>
    </ligand>
</feature>
<feature type="binding site" evidence="1">
    <location>
        <position position="232"/>
    </location>
    <ligand>
        <name>ATP</name>
        <dbReference type="ChEBI" id="CHEBI:30616"/>
    </ligand>
</feature>
<evidence type="ECO:0000255" key="1">
    <source>
        <dbReference type="HAMAP-Rule" id="MF_02006"/>
    </source>
</evidence>
<organism>
    <name type="scientific">Streptococcus pneumoniae (strain 70585)</name>
    <dbReference type="NCBI Taxonomy" id="488221"/>
    <lineage>
        <taxon>Bacteria</taxon>
        <taxon>Bacillati</taxon>
        <taxon>Bacillota</taxon>
        <taxon>Bacilli</taxon>
        <taxon>Lactobacillales</taxon>
        <taxon>Streptococcaceae</taxon>
        <taxon>Streptococcus</taxon>
    </lineage>
</organism>
<dbReference type="EC" id="6.1.1.1" evidence="1"/>
<dbReference type="EMBL" id="CP000918">
    <property type="protein sequence ID" value="ACO17562.1"/>
    <property type="molecule type" value="Genomic_DNA"/>
</dbReference>
<dbReference type="RefSeq" id="WP_000546866.1">
    <property type="nucleotide sequence ID" value="NC_012468.1"/>
</dbReference>
<dbReference type="SMR" id="C1CAS7"/>
<dbReference type="KEGG" id="snm:SP70585_2206"/>
<dbReference type="HOGENOM" id="CLU_024003_0_3_9"/>
<dbReference type="Proteomes" id="UP000002211">
    <property type="component" value="Chromosome"/>
</dbReference>
<dbReference type="GO" id="GO:0005829">
    <property type="term" value="C:cytosol"/>
    <property type="evidence" value="ECO:0007669"/>
    <property type="project" value="TreeGrafter"/>
</dbReference>
<dbReference type="GO" id="GO:0005524">
    <property type="term" value="F:ATP binding"/>
    <property type="evidence" value="ECO:0007669"/>
    <property type="project" value="UniProtKB-UniRule"/>
</dbReference>
<dbReference type="GO" id="GO:0003723">
    <property type="term" value="F:RNA binding"/>
    <property type="evidence" value="ECO:0007669"/>
    <property type="project" value="UniProtKB-KW"/>
</dbReference>
<dbReference type="GO" id="GO:0004831">
    <property type="term" value="F:tyrosine-tRNA ligase activity"/>
    <property type="evidence" value="ECO:0007669"/>
    <property type="project" value="UniProtKB-UniRule"/>
</dbReference>
<dbReference type="GO" id="GO:0006437">
    <property type="term" value="P:tyrosyl-tRNA aminoacylation"/>
    <property type="evidence" value="ECO:0007669"/>
    <property type="project" value="UniProtKB-UniRule"/>
</dbReference>
<dbReference type="CDD" id="cd00165">
    <property type="entry name" value="S4"/>
    <property type="match status" value="1"/>
</dbReference>
<dbReference type="CDD" id="cd00805">
    <property type="entry name" value="TyrRS_core"/>
    <property type="match status" value="1"/>
</dbReference>
<dbReference type="FunFam" id="1.10.240.10:FF:000001">
    <property type="entry name" value="Tyrosine--tRNA ligase"/>
    <property type="match status" value="1"/>
</dbReference>
<dbReference type="FunFam" id="3.10.290.10:FF:000012">
    <property type="entry name" value="Tyrosine--tRNA ligase"/>
    <property type="match status" value="1"/>
</dbReference>
<dbReference type="FunFam" id="3.40.50.620:FF:000008">
    <property type="entry name" value="Tyrosine--tRNA ligase"/>
    <property type="match status" value="1"/>
</dbReference>
<dbReference type="Gene3D" id="3.40.50.620">
    <property type="entry name" value="HUPs"/>
    <property type="match status" value="1"/>
</dbReference>
<dbReference type="Gene3D" id="3.10.290.10">
    <property type="entry name" value="RNA-binding S4 domain"/>
    <property type="match status" value="1"/>
</dbReference>
<dbReference type="Gene3D" id="1.10.240.10">
    <property type="entry name" value="Tyrosyl-Transfer RNA Synthetase"/>
    <property type="match status" value="1"/>
</dbReference>
<dbReference type="HAMAP" id="MF_02006">
    <property type="entry name" value="Tyr_tRNA_synth_type1"/>
    <property type="match status" value="1"/>
</dbReference>
<dbReference type="InterPro" id="IPR001412">
    <property type="entry name" value="aa-tRNA-synth_I_CS"/>
</dbReference>
<dbReference type="InterPro" id="IPR002305">
    <property type="entry name" value="aa-tRNA-synth_Ic"/>
</dbReference>
<dbReference type="InterPro" id="IPR014729">
    <property type="entry name" value="Rossmann-like_a/b/a_fold"/>
</dbReference>
<dbReference type="InterPro" id="IPR002942">
    <property type="entry name" value="S4_RNA-bd"/>
</dbReference>
<dbReference type="InterPro" id="IPR036986">
    <property type="entry name" value="S4_RNA-bd_sf"/>
</dbReference>
<dbReference type="InterPro" id="IPR054608">
    <property type="entry name" value="SYY-like_C"/>
</dbReference>
<dbReference type="InterPro" id="IPR002307">
    <property type="entry name" value="Tyr-tRNA-ligase"/>
</dbReference>
<dbReference type="InterPro" id="IPR024088">
    <property type="entry name" value="Tyr-tRNA-ligase_bac-type"/>
</dbReference>
<dbReference type="InterPro" id="IPR024107">
    <property type="entry name" value="Tyr-tRNA-ligase_bac_1"/>
</dbReference>
<dbReference type="NCBIfam" id="TIGR00234">
    <property type="entry name" value="tyrS"/>
    <property type="match status" value="1"/>
</dbReference>
<dbReference type="PANTHER" id="PTHR11766:SF0">
    <property type="entry name" value="TYROSINE--TRNA LIGASE, MITOCHONDRIAL"/>
    <property type="match status" value="1"/>
</dbReference>
<dbReference type="PANTHER" id="PTHR11766">
    <property type="entry name" value="TYROSYL-TRNA SYNTHETASE"/>
    <property type="match status" value="1"/>
</dbReference>
<dbReference type="Pfam" id="PF22421">
    <property type="entry name" value="SYY_C-terminal"/>
    <property type="match status" value="1"/>
</dbReference>
<dbReference type="Pfam" id="PF00579">
    <property type="entry name" value="tRNA-synt_1b"/>
    <property type="match status" value="1"/>
</dbReference>
<dbReference type="PRINTS" id="PR01040">
    <property type="entry name" value="TRNASYNTHTYR"/>
</dbReference>
<dbReference type="SMART" id="SM00363">
    <property type="entry name" value="S4"/>
    <property type="match status" value="1"/>
</dbReference>
<dbReference type="SUPFAM" id="SSF55174">
    <property type="entry name" value="Alpha-L RNA-binding motif"/>
    <property type="match status" value="1"/>
</dbReference>
<dbReference type="SUPFAM" id="SSF52374">
    <property type="entry name" value="Nucleotidylyl transferase"/>
    <property type="match status" value="1"/>
</dbReference>
<dbReference type="PROSITE" id="PS00178">
    <property type="entry name" value="AA_TRNA_LIGASE_I"/>
    <property type="match status" value="1"/>
</dbReference>
<dbReference type="PROSITE" id="PS50889">
    <property type="entry name" value="S4"/>
    <property type="match status" value="1"/>
</dbReference>
<comment type="function">
    <text evidence="1">Catalyzes the attachment of tyrosine to tRNA(Tyr) in a two-step reaction: tyrosine is first activated by ATP to form Tyr-AMP and then transferred to the acceptor end of tRNA(Tyr).</text>
</comment>
<comment type="catalytic activity">
    <reaction evidence="1">
        <text>tRNA(Tyr) + L-tyrosine + ATP = L-tyrosyl-tRNA(Tyr) + AMP + diphosphate + H(+)</text>
        <dbReference type="Rhea" id="RHEA:10220"/>
        <dbReference type="Rhea" id="RHEA-COMP:9706"/>
        <dbReference type="Rhea" id="RHEA-COMP:9707"/>
        <dbReference type="ChEBI" id="CHEBI:15378"/>
        <dbReference type="ChEBI" id="CHEBI:30616"/>
        <dbReference type="ChEBI" id="CHEBI:33019"/>
        <dbReference type="ChEBI" id="CHEBI:58315"/>
        <dbReference type="ChEBI" id="CHEBI:78442"/>
        <dbReference type="ChEBI" id="CHEBI:78536"/>
        <dbReference type="ChEBI" id="CHEBI:456215"/>
        <dbReference type="EC" id="6.1.1.1"/>
    </reaction>
</comment>
<comment type="subunit">
    <text evidence="1">Homodimer.</text>
</comment>
<comment type="subcellular location">
    <subcellularLocation>
        <location evidence="1">Cytoplasm</location>
    </subcellularLocation>
</comment>
<comment type="similarity">
    <text evidence="1">Belongs to the class-I aminoacyl-tRNA synthetase family. TyrS type 1 subfamily.</text>
</comment>
<keyword id="KW-0030">Aminoacyl-tRNA synthetase</keyword>
<keyword id="KW-0067">ATP-binding</keyword>
<keyword id="KW-0963">Cytoplasm</keyword>
<keyword id="KW-0436">Ligase</keyword>
<keyword id="KW-0547">Nucleotide-binding</keyword>
<keyword id="KW-0648">Protein biosynthesis</keyword>
<keyword id="KW-0694">RNA-binding</keyword>
<accession>C1CAS7</accession>
<proteinExistence type="inferred from homology"/>
<sequence>MHIFDELKDRGLIFQTTDEEALRKALEEGQVSYYTGYDPTADSLHLGHLVAILTSRRLQLAGHKPYALVGGATGLIGDPSFKDAERSLQTKDTVDGWVKSIQGQLSRFLDFENGENKAVMVNNYDWFGSISFIDFLRDIGKYFTVNYMMSKESVKKRIETGISYTEFAYQIMQGYDFFVLNQDHNVTLQIGGSDQWGNMTAGTELLRRKADKTGHVITVPLITDATGKKFGKSEGNAVWLNPEKTSPYEMYQFWMNVMDADAVRFLKIFTFLSLDEIEDIRKQFEAAPHERLAQKVLAREVVTLVHGEEAYKEALNITEQLFAGNIKNLSVKELKQGLRGVPNYQVQADEHNNIVELLVSSGIVNSKRQAREDVQNGAIYVNGDRIQDLDYVLSDADKLENELTVIRRGKKKYFVLTY</sequence>